<name>WECF_ECODH</name>
<accession>B1XAG4</accession>
<dbReference type="EC" id="2.4.1.325" evidence="1"/>
<dbReference type="EMBL" id="CP000948">
    <property type="protein sequence ID" value="ACB04822.1"/>
    <property type="molecule type" value="Genomic_DNA"/>
</dbReference>
<dbReference type="RefSeq" id="WP_000217234.1">
    <property type="nucleotide sequence ID" value="NC_010473.1"/>
</dbReference>
<dbReference type="CAZy" id="GT56">
    <property type="family name" value="Glycosyltransferase Family 56"/>
</dbReference>
<dbReference type="KEGG" id="ecd:ECDH10B_3982"/>
<dbReference type="HOGENOM" id="CLU_066584_0_0_6"/>
<dbReference type="UniPathway" id="UPA00566"/>
<dbReference type="GO" id="GO:0005886">
    <property type="term" value="C:plasma membrane"/>
    <property type="evidence" value="ECO:0007669"/>
    <property type="project" value="UniProtKB-SubCell"/>
</dbReference>
<dbReference type="GO" id="GO:0102031">
    <property type="term" value="F:4-acetamido-4,6-dideoxy-D-galactose transferase activity"/>
    <property type="evidence" value="ECO:0007669"/>
    <property type="project" value="UniProtKB-EC"/>
</dbReference>
<dbReference type="GO" id="GO:0008417">
    <property type="term" value="F:fucosyltransferase activity"/>
    <property type="evidence" value="ECO:0007669"/>
    <property type="project" value="InterPro"/>
</dbReference>
<dbReference type="GO" id="GO:0009246">
    <property type="term" value="P:enterobacterial common antigen biosynthetic process"/>
    <property type="evidence" value="ECO:0007669"/>
    <property type="project" value="UniProtKB-UniRule"/>
</dbReference>
<dbReference type="GO" id="GO:0036065">
    <property type="term" value="P:fucosylation"/>
    <property type="evidence" value="ECO:0007669"/>
    <property type="project" value="InterPro"/>
</dbReference>
<dbReference type="HAMAP" id="MF_01002">
    <property type="entry name" value="WecF_RffT"/>
    <property type="match status" value="1"/>
</dbReference>
<dbReference type="InterPro" id="IPR009993">
    <property type="entry name" value="WecF"/>
</dbReference>
<dbReference type="NCBIfam" id="NF002752">
    <property type="entry name" value="PRK02797.1-1"/>
    <property type="match status" value="1"/>
</dbReference>
<dbReference type="NCBIfam" id="NF002753">
    <property type="entry name" value="PRK02797.1-2"/>
    <property type="match status" value="1"/>
</dbReference>
<dbReference type="NCBIfam" id="NF002754">
    <property type="entry name" value="PRK02797.1-3"/>
    <property type="match status" value="1"/>
</dbReference>
<dbReference type="Pfam" id="PF07429">
    <property type="entry name" value="Glyco_transf_56"/>
    <property type="match status" value="1"/>
</dbReference>
<proteinExistence type="inferred from homology"/>
<protein>
    <recommendedName>
        <fullName evidence="1">TDP-N-acetylfucosamine:lipid II N-acetylfucosaminyltransferase</fullName>
        <ecNumber evidence="1">2.4.1.325</ecNumber>
    </recommendedName>
    <alternativeName>
        <fullName evidence="1">4-alpha-L-fucosyltransferase</fullName>
    </alternativeName>
    <alternativeName>
        <fullName evidence="1">TDP-Fuc4NAc:lipid II Fuc4NAc transferase</fullName>
        <shortName evidence="1">Fuc4NAc transferase</shortName>
    </alternativeName>
</protein>
<sequence length="359" mass="40640">MTVLIHVLGSDIPHHNRTVLRFFNDALAATSEHAREFMVVGKDDGLSDSCPALSVQFFPGKKSLAEAVIAKAKANRQQRFFFHGQFNPTLWLALLSGGIKPSQFFWHIWGADLYELSSGLRYKLFYPLRRLAQKRVGCVFATRGDLSFFAKTHPKVRGELLFFPTRMDPSLNTMANDRQREGKMTILVGNSGDRSNEHIAALRAVHQQFGDTVKVVVPMGYPPNNEAYIEEVRQAGLELFSEENLQILSEKLEFDAYLALLRQCDLGYFIFARQQGIGTLCLLIQAGIPCVLNRENPFWQDMTEQHLPVLFTTDDLNEDIVREAQRQLASVDKNTIAFFSPNYLQGWQRALAIAAREVA</sequence>
<organism>
    <name type="scientific">Escherichia coli (strain K12 / DH10B)</name>
    <dbReference type="NCBI Taxonomy" id="316385"/>
    <lineage>
        <taxon>Bacteria</taxon>
        <taxon>Pseudomonadati</taxon>
        <taxon>Pseudomonadota</taxon>
        <taxon>Gammaproteobacteria</taxon>
        <taxon>Enterobacterales</taxon>
        <taxon>Enterobacteriaceae</taxon>
        <taxon>Escherichia</taxon>
    </lineage>
</organism>
<keyword id="KW-0997">Cell inner membrane</keyword>
<keyword id="KW-1003">Cell membrane</keyword>
<keyword id="KW-0328">Glycosyltransferase</keyword>
<keyword id="KW-0472">Membrane</keyword>
<keyword id="KW-0808">Transferase</keyword>
<evidence type="ECO:0000255" key="1">
    <source>
        <dbReference type="HAMAP-Rule" id="MF_01002"/>
    </source>
</evidence>
<gene>
    <name evidence="1" type="primary">wecF</name>
    <name evidence="1" type="synonym">rffT</name>
    <name type="ordered locus">ECDH10B_3982</name>
</gene>
<comment type="function">
    <text evidence="1">Catalyzes the synthesis of Und-PP-GlcNAc-ManNAcA-Fuc4NAc (Lipid III), the third lipid-linked intermediate involved in ECA synthesis.</text>
</comment>
<comment type="catalytic activity">
    <reaction evidence="1">
        <text>beta-D-ManNAcA-(1-&gt;4)-alpha-D-GlcNAc-di-trans,octa-cis-undecaprenyl diphosphate + dTDP-4-acetamido-4,6-dideoxy-alpha-D-galactose = alpha-D-FucNAc4-(1-&gt;4)-beta-D-ManNAcA-(1-&gt;4)-D-GlcNAc-undecaprenyl diphosphate + dTDP + H(+)</text>
        <dbReference type="Rhea" id="RHEA:28759"/>
        <dbReference type="ChEBI" id="CHEBI:15378"/>
        <dbReference type="ChEBI" id="CHEBI:58369"/>
        <dbReference type="ChEBI" id="CHEBI:61495"/>
        <dbReference type="ChEBI" id="CHEBI:61496"/>
        <dbReference type="ChEBI" id="CHEBI:68493"/>
        <dbReference type="EC" id="2.4.1.325"/>
    </reaction>
</comment>
<comment type="pathway">
    <text evidence="1">Bacterial outer membrane biogenesis; enterobacterial common antigen biosynthesis.</text>
</comment>
<comment type="subcellular location">
    <subcellularLocation>
        <location evidence="1">Cell inner membrane</location>
        <topology evidence="1">Peripheral membrane protein</topology>
    </subcellularLocation>
</comment>
<comment type="similarity">
    <text evidence="1">Belongs to the glycosyltransferase 56 family.</text>
</comment>
<reference key="1">
    <citation type="journal article" date="2008" name="J. Bacteriol.">
        <title>The complete genome sequence of Escherichia coli DH10B: insights into the biology of a laboratory workhorse.</title>
        <authorList>
            <person name="Durfee T."/>
            <person name="Nelson R."/>
            <person name="Baldwin S."/>
            <person name="Plunkett G. III"/>
            <person name="Burland V."/>
            <person name="Mau B."/>
            <person name="Petrosino J.F."/>
            <person name="Qin X."/>
            <person name="Muzny D.M."/>
            <person name="Ayele M."/>
            <person name="Gibbs R.A."/>
            <person name="Csorgo B."/>
            <person name="Posfai G."/>
            <person name="Weinstock G.M."/>
            <person name="Blattner F.R."/>
        </authorList>
    </citation>
    <scope>NUCLEOTIDE SEQUENCE [LARGE SCALE GENOMIC DNA]</scope>
    <source>
        <strain>K12 / DH10B</strain>
    </source>
</reference>
<feature type="chain" id="PRO_1000134598" description="TDP-N-acetylfucosamine:lipid II N-acetylfucosaminyltransferase">
    <location>
        <begin position="1"/>
        <end position="359"/>
    </location>
</feature>